<dbReference type="EMBL" id="AJ269693">
    <property type="protein sequence ID" value="CAC80633.1"/>
    <property type="molecule type" value="Genomic_DNA"/>
</dbReference>
<dbReference type="SMR" id="P59138"/>
<dbReference type="GO" id="GO:0009507">
    <property type="term" value="C:chloroplast"/>
    <property type="evidence" value="ECO:0007669"/>
    <property type="project" value="UniProtKB-SubCell"/>
</dbReference>
<dbReference type="GO" id="GO:0015935">
    <property type="term" value="C:small ribosomal subunit"/>
    <property type="evidence" value="ECO:0007669"/>
    <property type="project" value="InterPro"/>
</dbReference>
<dbReference type="GO" id="GO:0019843">
    <property type="term" value="F:rRNA binding"/>
    <property type="evidence" value="ECO:0007669"/>
    <property type="project" value="UniProtKB-UniRule"/>
</dbReference>
<dbReference type="GO" id="GO:0003735">
    <property type="term" value="F:structural constituent of ribosome"/>
    <property type="evidence" value="ECO:0007669"/>
    <property type="project" value="InterPro"/>
</dbReference>
<dbReference type="GO" id="GO:0042274">
    <property type="term" value="P:ribosomal small subunit biogenesis"/>
    <property type="evidence" value="ECO:0007669"/>
    <property type="project" value="TreeGrafter"/>
</dbReference>
<dbReference type="GO" id="GO:0006412">
    <property type="term" value="P:translation"/>
    <property type="evidence" value="ECO:0007669"/>
    <property type="project" value="UniProtKB-UniRule"/>
</dbReference>
<dbReference type="CDD" id="cd00165">
    <property type="entry name" value="S4"/>
    <property type="match status" value="1"/>
</dbReference>
<dbReference type="FunFam" id="1.10.1050.10:FF:000002">
    <property type="entry name" value="30S ribosomal protein S4, chloroplastic"/>
    <property type="match status" value="1"/>
</dbReference>
<dbReference type="FunFam" id="3.10.290.10:FF:000081">
    <property type="entry name" value="30S ribosomal protein S4, chloroplastic"/>
    <property type="match status" value="1"/>
</dbReference>
<dbReference type="Gene3D" id="1.10.1050.10">
    <property type="entry name" value="Ribosomal Protein S4 Delta 41, Chain A, domain 1"/>
    <property type="match status" value="1"/>
</dbReference>
<dbReference type="Gene3D" id="3.10.290.10">
    <property type="entry name" value="RNA-binding S4 domain"/>
    <property type="match status" value="1"/>
</dbReference>
<dbReference type="HAMAP" id="MF_01306_B">
    <property type="entry name" value="Ribosomal_uS4_B"/>
    <property type="match status" value="1"/>
</dbReference>
<dbReference type="InterPro" id="IPR022801">
    <property type="entry name" value="Ribosomal_uS4"/>
</dbReference>
<dbReference type="InterPro" id="IPR005709">
    <property type="entry name" value="Ribosomal_uS4_bac-type"/>
</dbReference>
<dbReference type="InterPro" id="IPR018079">
    <property type="entry name" value="Ribosomal_uS4_CS"/>
</dbReference>
<dbReference type="InterPro" id="IPR001912">
    <property type="entry name" value="Ribosomal_uS4_N"/>
</dbReference>
<dbReference type="InterPro" id="IPR002942">
    <property type="entry name" value="S4_RNA-bd"/>
</dbReference>
<dbReference type="InterPro" id="IPR036986">
    <property type="entry name" value="S4_RNA-bd_sf"/>
</dbReference>
<dbReference type="NCBIfam" id="NF003717">
    <property type="entry name" value="PRK05327.1"/>
    <property type="match status" value="1"/>
</dbReference>
<dbReference type="NCBIfam" id="TIGR01017">
    <property type="entry name" value="rpsD_bact"/>
    <property type="match status" value="1"/>
</dbReference>
<dbReference type="PANTHER" id="PTHR11831">
    <property type="entry name" value="30S 40S RIBOSOMAL PROTEIN"/>
    <property type="match status" value="1"/>
</dbReference>
<dbReference type="PANTHER" id="PTHR11831:SF4">
    <property type="entry name" value="SMALL RIBOSOMAL SUBUNIT PROTEIN US4M"/>
    <property type="match status" value="1"/>
</dbReference>
<dbReference type="Pfam" id="PF00163">
    <property type="entry name" value="Ribosomal_S4"/>
    <property type="match status" value="1"/>
</dbReference>
<dbReference type="Pfam" id="PF01479">
    <property type="entry name" value="S4"/>
    <property type="match status" value="1"/>
</dbReference>
<dbReference type="SMART" id="SM01390">
    <property type="entry name" value="Ribosomal_S4"/>
    <property type="match status" value="1"/>
</dbReference>
<dbReference type="SMART" id="SM00363">
    <property type="entry name" value="S4"/>
    <property type="match status" value="1"/>
</dbReference>
<dbReference type="SUPFAM" id="SSF55174">
    <property type="entry name" value="Alpha-L RNA-binding motif"/>
    <property type="match status" value="1"/>
</dbReference>
<dbReference type="PROSITE" id="PS00632">
    <property type="entry name" value="RIBOSOMAL_S4"/>
    <property type="match status" value="1"/>
</dbReference>
<dbReference type="PROSITE" id="PS50889">
    <property type="entry name" value="S4"/>
    <property type="match status" value="1"/>
</dbReference>
<protein>
    <recommendedName>
        <fullName evidence="2">Small ribosomal subunit protein uS4c</fullName>
    </recommendedName>
    <alternativeName>
        <fullName>30S ribosomal protein S4, chloroplastic</fullName>
    </alternativeName>
</protein>
<geneLocation type="chloroplast"/>
<gene>
    <name type="primary">rps4</name>
</gene>
<name>RR4_CYABU</name>
<reference key="1">
    <citation type="journal article" date="2002" name="Cryptogam. Bryol.">
        <title>The systematic position of the Hypoptergiaceae (Bryopsida) inferred from rps4 gene sequences.</title>
        <authorList>
            <person name="Bloecher R."/>
            <person name="Capesius I."/>
        </authorList>
    </citation>
    <scope>NUCLEOTIDE SEQUENCE [GENOMIC DNA]</scope>
    <source>
        <tissue>Gametophyte</tissue>
    </source>
</reference>
<keyword id="KW-0150">Chloroplast</keyword>
<keyword id="KW-0934">Plastid</keyword>
<keyword id="KW-0687">Ribonucleoprotein</keyword>
<keyword id="KW-0689">Ribosomal protein</keyword>
<keyword id="KW-0694">RNA-binding</keyword>
<keyword id="KW-0699">rRNA-binding</keyword>
<proteinExistence type="inferred from homology"/>
<accession>P59138</accession>
<evidence type="ECO:0000250" key="1"/>
<evidence type="ECO:0000305" key="2"/>
<sequence length="202" mass="23569">MSRYRGPRVRIIRRLGALPGLTNKTPQLKSSSITQSTSNKKISQYRIRLEEKQKLRFHYGITERQLLNYVRIARKAKGSTGEVLLQLLEMRLDNVIFRLGMFPTIPGARQLVNHRHILVNGPIVDIPSYQCKPQDFITIKNQQKSEAIISKNIEFYQKYKIPNHLTYNYLEKKGLVNQILDRESIGLKINELLVVEYYSRQA</sequence>
<comment type="function">
    <text evidence="1">One of the primary rRNA binding proteins, it binds directly to 16S rRNA where it nucleates assembly of the body of the 30S subunit.</text>
</comment>
<comment type="function">
    <text evidence="1">With S5 and S12 plays an important role in translational accuracy.</text>
</comment>
<comment type="subunit">
    <text evidence="1">Part of the 30S ribosomal subunit. Contacts protein S5. The interaction surface between S4 and S5 is involved in control of translational fidelity (By similarity).</text>
</comment>
<comment type="subcellular location">
    <subcellularLocation>
        <location>Plastid</location>
        <location>Chloroplast</location>
    </subcellularLocation>
</comment>
<comment type="similarity">
    <text evidence="2">Belongs to the universal ribosomal protein uS4 family.</text>
</comment>
<organism>
    <name type="scientific">Cyathophorum bulbosum</name>
    <name type="common">Moss</name>
    <dbReference type="NCBI Taxonomy" id="98737"/>
    <lineage>
        <taxon>Eukaryota</taxon>
        <taxon>Viridiplantae</taxon>
        <taxon>Streptophyta</taxon>
        <taxon>Embryophyta</taxon>
        <taxon>Bryophyta</taxon>
        <taxon>Bryophytina</taxon>
        <taxon>Bryopsida</taxon>
        <taxon>Bryidae</taxon>
        <taxon>Hypnanae</taxon>
        <taxon>Hookeriales</taxon>
        <taxon>Hypopterygiaceae</taxon>
        <taxon>Cyathophorum</taxon>
    </lineage>
</organism>
<feature type="chain" id="PRO_0000132560" description="Small ribosomal subunit protein uS4c">
    <location>
        <begin position="1"/>
        <end position="202"/>
    </location>
</feature>
<feature type="domain" description="S4 RNA-binding">
    <location>
        <begin position="90"/>
        <end position="153"/>
    </location>
</feature>